<proteinExistence type="evidence at protein level"/>
<sequence>MLPRAAWSLVLRKGGGGRRGMHSSEGTTRGGGKMSPYTNCYAQRYYPMPEEPFCTELNAEEQALKEKEKGSWTQLTHAEKVALYRLQFNETFAEMNRRSNEWKTVMGCVFFFIGFAALVIWWQRVYVFPPKPITLTDERKAQQLQRMLDMKVNPVQGLASRWDYEKKQWKK</sequence>
<organism>
    <name type="scientific">Homo sapiens</name>
    <name type="common">Human</name>
    <dbReference type="NCBI Taxonomy" id="9606"/>
    <lineage>
        <taxon>Eukaryota</taxon>
        <taxon>Metazoa</taxon>
        <taxon>Chordata</taxon>
        <taxon>Craniata</taxon>
        <taxon>Vertebrata</taxon>
        <taxon>Euteleostomi</taxon>
        <taxon>Mammalia</taxon>
        <taxon>Eutheria</taxon>
        <taxon>Euarchontoglires</taxon>
        <taxon>Primates</taxon>
        <taxon>Haplorrhini</taxon>
        <taxon>Catarrhini</taxon>
        <taxon>Hominidae</taxon>
        <taxon>Homo</taxon>
    </lineage>
</organism>
<accession>Q96KJ9</accession>
<accession>Q6GTF4</accession>
<accession>Q9H0Z4</accession>
<reference key="1">
    <citation type="journal article" date="2001" name="Gene">
        <title>Mammalian subunit IV isoforms of cytochrome c oxidase.</title>
        <authorList>
            <person name="Huettemann M."/>
            <person name="Kadenbach B."/>
            <person name="Grossman L.I."/>
        </authorList>
    </citation>
    <scope>NUCLEOTIDE SEQUENCE [MRNA]</scope>
    <scope>VARIANT HIS-161</scope>
</reference>
<reference key="2">
    <citation type="journal article" date="2001" name="Nature">
        <title>The DNA sequence and comparative analysis of human chromosome 20.</title>
        <authorList>
            <person name="Deloukas P."/>
            <person name="Matthews L.H."/>
            <person name="Ashurst J.L."/>
            <person name="Burton J."/>
            <person name="Gilbert J.G.R."/>
            <person name="Jones M."/>
            <person name="Stavrides G."/>
            <person name="Almeida J.P."/>
            <person name="Babbage A.K."/>
            <person name="Bagguley C.L."/>
            <person name="Bailey J."/>
            <person name="Barlow K.F."/>
            <person name="Bates K.N."/>
            <person name="Beard L.M."/>
            <person name="Beare D.M."/>
            <person name="Beasley O.P."/>
            <person name="Bird C.P."/>
            <person name="Blakey S.E."/>
            <person name="Bridgeman A.M."/>
            <person name="Brown A.J."/>
            <person name="Buck D."/>
            <person name="Burrill W.D."/>
            <person name="Butler A.P."/>
            <person name="Carder C."/>
            <person name="Carter N.P."/>
            <person name="Chapman J.C."/>
            <person name="Clamp M."/>
            <person name="Clark G."/>
            <person name="Clark L.N."/>
            <person name="Clark S.Y."/>
            <person name="Clee C.M."/>
            <person name="Clegg S."/>
            <person name="Cobley V.E."/>
            <person name="Collier R.E."/>
            <person name="Connor R.E."/>
            <person name="Corby N.R."/>
            <person name="Coulson A."/>
            <person name="Coville G.J."/>
            <person name="Deadman R."/>
            <person name="Dhami P.D."/>
            <person name="Dunn M."/>
            <person name="Ellington A.G."/>
            <person name="Frankland J.A."/>
            <person name="Fraser A."/>
            <person name="French L."/>
            <person name="Garner P."/>
            <person name="Grafham D.V."/>
            <person name="Griffiths C."/>
            <person name="Griffiths M.N.D."/>
            <person name="Gwilliam R."/>
            <person name="Hall R.E."/>
            <person name="Hammond S."/>
            <person name="Harley J.L."/>
            <person name="Heath P.D."/>
            <person name="Ho S."/>
            <person name="Holden J.L."/>
            <person name="Howden P.J."/>
            <person name="Huckle E."/>
            <person name="Hunt A.R."/>
            <person name="Hunt S.E."/>
            <person name="Jekosch K."/>
            <person name="Johnson C.M."/>
            <person name="Johnson D."/>
            <person name="Kay M.P."/>
            <person name="Kimberley A.M."/>
            <person name="King A."/>
            <person name="Knights A."/>
            <person name="Laird G.K."/>
            <person name="Lawlor S."/>
            <person name="Lehvaeslaiho M.H."/>
            <person name="Leversha M.A."/>
            <person name="Lloyd C."/>
            <person name="Lloyd D.M."/>
            <person name="Lovell J.D."/>
            <person name="Marsh V.L."/>
            <person name="Martin S.L."/>
            <person name="McConnachie L.J."/>
            <person name="McLay K."/>
            <person name="McMurray A.A."/>
            <person name="Milne S.A."/>
            <person name="Mistry D."/>
            <person name="Moore M.J.F."/>
            <person name="Mullikin J.C."/>
            <person name="Nickerson T."/>
            <person name="Oliver K."/>
            <person name="Parker A."/>
            <person name="Patel R."/>
            <person name="Pearce T.A.V."/>
            <person name="Peck A.I."/>
            <person name="Phillimore B.J.C.T."/>
            <person name="Prathalingam S.R."/>
            <person name="Plumb R.W."/>
            <person name="Ramsay H."/>
            <person name="Rice C.M."/>
            <person name="Ross M.T."/>
            <person name="Scott C.E."/>
            <person name="Sehra H.K."/>
            <person name="Shownkeen R."/>
            <person name="Sims S."/>
            <person name="Skuce C.D."/>
            <person name="Smith M.L."/>
            <person name="Soderlund C."/>
            <person name="Steward C.A."/>
            <person name="Sulston J.E."/>
            <person name="Swann R.M."/>
            <person name="Sycamore N."/>
            <person name="Taylor R."/>
            <person name="Tee L."/>
            <person name="Thomas D.W."/>
            <person name="Thorpe A."/>
            <person name="Tracey A."/>
            <person name="Tromans A.C."/>
            <person name="Vaudin M."/>
            <person name="Wall M."/>
            <person name="Wallis J.M."/>
            <person name="Whitehead S.L."/>
            <person name="Whittaker P."/>
            <person name="Willey D.L."/>
            <person name="Williams L."/>
            <person name="Williams S.A."/>
            <person name="Wilming L."/>
            <person name="Wray P.W."/>
            <person name="Hubbard T."/>
            <person name="Durbin R.M."/>
            <person name="Bentley D.R."/>
            <person name="Beck S."/>
            <person name="Rogers J."/>
        </authorList>
    </citation>
    <scope>NUCLEOTIDE SEQUENCE [LARGE SCALE GENOMIC DNA]</scope>
</reference>
<reference key="3">
    <citation type="journal article" date="2004" name="Genome Res.">
        <title>The status, quality, and expansion of the NIH full-length cDNA project: the Mammalian Gene Collection (MGC).</title>
        <authorList>
            <consortium name="The MGC Project Team"/>
        </authorList>
    </citation>
    <scope>NUCLEOTIDE SEQUENCE [LARGE SCALE MRNA]</scope>
    <source>
        <tissue>Placenta</tissue>
    </source>
</reference>
<reference key="4">
    <citation type="journal article" date="2009" name="Am. J. Hum. Genet.">
        <title>Exocrine pancreatic insufficiency, dyserythropoeitic anemia, and calvarial hyperostosis are caused by a mutation in the COX4I2 gene.</title>
        <authorList>
            <person name="Shteyer E."/>
            <person name="Saada A."/>
            <person name="Shaag A."/>
            <person name="Al-Hijawi F.A."/>
            <person name="Kidess R."/>
            <person name="Revel-Vilk S."/>
            <person name="Elpeleg O."/>
        </authorList>
    </citation>
    <scope>VARIANT EPIDACH LYS-138</scope>
    <scope>CHARACTERIZATION OF VARIANT EPIDACH LYS-138</scope>
</reference>
<name>COX42_HUMAN</name>
<dbReference type="EMBL" id="AF257180">
    <property type="protein sequence ID" value="AAK49333.1"/>
    <property type="molecule type" value="mRNA"/>
</dbReference>
<dbReference type="EMBL" id="AL117381">
    <property type="status" value="NOT_ANNOTATED_CDS"/>
    <property type="molecule type" value="Genomic_DNA"/>
</dbReference>
<dbReference type="EMBL" id="BC057779">
    <property type="protein sequence ID" value="AAH57779.1"/>
    <property type="molecule type" value="mRNA"/>
</dbReference>
<dbReference type="CCDS" id="CCDS13187.1"/>
<dbReference type="RefSeq" id="NP_115998.2">
    <property type="nucleotide sequence ID" value="NM_032609.2"/>
</dbReference>
<dbReference type="SMR" id="Q96KJ9"/>
<dbReference type="BioGRID" id="124215">
    <property type="interactions" value="26"/>
</dbReference>
<dbReference type="FunCoup" id="Q96KJ9">
    <property type="interactions" value="229"/>
</dbReference>
<dbReference type="IntAct" id="Q96KJ9">
    <property type="interactions" value="21"/>
</dbReference>
<dbReference type="STRING" id="9606.ENSP00000365243"/>
<dbReference type="TCDB" id="3.D.4.11.1">
    <property type="family name" value="the proton-translocating cytochrome oxidase (cox) superfamily"/>
</dbReference>
<dbReference type="GlyGen" id="Q96KJ9">
    <property type="glycosylation" value="2 sites, 1 O-linked glycan (2 sites)"/>
</dbReference>
<dbReference type="iPTMnet" id="Q96KJ9"/>
<dbReference type="PhosphoSitePlus" id="Q96KJ9"/>
<dbReference type="BioMuta" id="COX4I2"/>
<dbReference type="DMDM" id="73620953"/>
<dbReference type="jPOST" id="Q96KJ9"/>
<dbReference type="MassIVE" id="Q96KJ9"/>
<dbReference type="PaxDb" id="9606-ENSP00000365243"/>
<dbReference type="PeptideAtlas" id="Q96KJ9"/>
<dbReference type="ProteomicsDB" id="77079"/>
<dbReference type="Antibodypedia" id="25206">
    <property type="antibodies" value="186 antibodies from 31 providers"/>
</dbReference>
<dbReference type="DNASU" id="84701"/>
<dbReference type="Ensembl" id="ENST00000376075.4">
    <property type="protein sequence ID" value="ENSP00000365243.3"/>
    <property type="gene ID" value="ENSG00000131055.5"/>
</dbReference>
<dbReference type="GeneID" id="84701"/>
<dbReference type="KEGG" id="hsa:84701"/>
<dbReference type="MANE-Select" id="ENST00000376075.4">
    <property type="protein sequence ID" value="ENSP00000365243.3"/>
    <property type="RefSeq nucleotide sequence ID" value="NM_032609.3"/>
    <property type="RefSeq protein sequence ID" value="NP_115998.2"/>
</dbReference>
<dbReference type="UCSC" id="uc002wwj.2">
    <property type="organism name" value="human"/>
</dbReference>
<dbReference type="AGR" id="HGNC:16232"/>
<dbReference type="CTD" id="84701"/>
<dbReference type="DisGeNET" id="84701"/>
<dbReference type="GeneCards" id="COX4I2"/>
<dbReference type="HGNC" id="HGNC:16232">
    <property type="gene designation" value="COX4I2"/>
</dbReference>
<dbReference type="HPA" id="ENSG00000131055">
    <property type="expression patterns" value="Tissue enhanced (lung, placenta)"/>
</dbReference>
<dbReference type="MalaCards" id="COX4I2"/>
<dbReference type="MIM" id="607976">
    <property type="type" value="gene"/>
</dbReference>
<dbReference type="MIM" id="612714">
    <property type="type" value="phenotype"/>
</dbReference>
<dbReference type="neXtProt" id="NX_Q96KJ9"/>
<dbReference type="OpenTargets" id="ENSG00000131055"/>
<dbReference type="Orphanet" id="199337">
    <property type="disease" value="Pancreatic insufficiency-anemia-hyperostosis syndrome"/>
</dbReference>
<dbReference type="PharmGKB" id="PA26783"/>
<dbReference type="VEuPathDB" id="HostDB:ENSG00000131055"/>
<dbReference type="eggNOG" id="KOG4075">
    <property type="taxonomic scope" value="Eukaryota"/>
</dbReference>
<dbReference type="GeneTree" id="ENSGT00390000002407"/>
<dbReference type="HOGENOM" id="CLU_117340_1_1_1"/>
<dbReference type="InParanoid" id="Q96KJ9"/>
<dbReference type="OMA" id="DEPFCTD"/>
<dbReference type="OrthoDB" id="186013at2759"/>
<dbReference type="PAN-GO" id="Q96KJ9">
    <property type="GO annotations" value="2 GO annotations based on evolutionary models"/>
</dbReference>
<dbReference type="PhylomeDB" id="Q96KJ9"/>
<dbReference type="TreeFam" id="TF105061"/>
<dbReference type="PathwayCommons" id="Q96KJ9"/>
<dbReference type="Reactome" id="R-HSA-5628897">
    <property type="pathway name" value="TP53 Regulates Metabolic Genes"/>
</dbReference>
<dbReference type="Reactome" id="R-HSA-611105">
    <property type="pathway name" value="Respiratory electron transport"/>
</dbReference>
<dbReference type="Reactome" id="R-HSA-9707564">
    <property type="pathway name" value="Cytoprotection by HMOX1"/>
</dbReference>
<dbReference type="Reactome" id="R-HSA-9864848">
    <property type="pathway name" value="Complex IV assembly"/>
</dbReference>
<dbReference type="SignaLink" id="Q96KJ9"/>
<dbReference type="UniPathway" id="UPA00705"/>
<dbReference type="BioGRID-ORCS" id="84701">
    <property type="hits" value="25 hits in 1152 CRISPR screens"/>
</dbReference>
<dbReference type="GeneWiki" id="COX4I2"/>
<dbReference type="GenomeRNAi" id="84701"/>
<dbReference type="Pharos" id="Q96KJ9">
    <property type="development level" value="Tbio"/>
</dbReference>
<dbReference type="PRO" id="PR:Q96KJ9"/>
<dbReference type="Proteomes" id="UP000005640">
    <property type="component" value="Chromosome 20"/>
</dbReference>
<dbReference type="RNAct" id="Q96KJ9">
    <property type="molecule type" value="protein"/>
</dbReference>
<dbReference type="Bgee" id="ENSG00000131055">
    <property type="expression patterns" value="Expressed in apex of heart and 140 other cell types or tissues"/>
</dbReference>
<dbReference type="ExpressionAtlas" id="Q96KJ9">
    <property type="expression patterns" value="baseline and differential"/>
</dbReference>
<dbReference type="GO" id="GO:0005743">
    <property type="term" value="C:mitochondrial inner membrane"/>
    <property type="evidence" value="ECO:0000304"/>
    <property type="project" value="Reactome"/>
</dbReference>
<dbReference type="GO" id="GO:0005758">
    <property type="term" value="C:mitochondrial intermembrane space"/>
    <property type="evidence" value="ECO:0000304"/>
    <property type="project" value="Reactome"/>
</dbReference>
<dbReference type="GO" id="GO:0005739">
    <property type="term" value="C:mitochondrion"/>
    <property type="evidence" value="ECO:0006056"/>
    <property type="project" value="FlyBase"/>
</dbReference>
<dbReference type="GO" id="GO:0045277">
    <property type="term" value="C:respiratory chain complex IV"/>
    <property type="evidence" value="ECO:0000318"/>
    <property type="project" value="GO_Central"/>
</dbReference>
<dbReference type="GO" id="GO:0045333">
    <property type="term" value="P:cellular respiration"/>
    <property type="evidence" value="ECO:0000303"/>
    <property type="project" value="UniProtKB"/>
</dbReference>
<dbReference type="GO" id="GO:0006091">
    <property type="term" value="P:generation of precursor metabolites and energy"/>
    <property type="evidence" value="ECO:0000303"/>
    <property type="project" value="UniProtKB"/>
</dbReference>
<dbReference type="GO" id="GO:0006123">
    <property type="term" value="P:mitochondrial electron transport, cytochrome c to oxygen"/>
    <property type="evidence" value="ECO:0000314"/>
    <property type="project" value="UniProtKB"/>
</dbReference>
<dbReference type="CDD" id="cd00922">
    <property type="entry name" value="Cyt_c_Oxidase_IV"/>
    <property type="match status" value="1"/>
</dbReference>
<dbReference type="FunFam" id="1.10.442.10:FF:000001">
    <property type="entry name" value="Cytochrome c oxidase subunit 4 isoform 1"/>
    <property type="match status" value="1"/>
</dbReference>
<dbReference type="Gene3D" id="1.10.442.10">
    <property type="entry name" value="Cytochrome c oxidase subunit IV"/>
    <property type="match status" value="1"/>
</dbReference>
<dbReference type="InterPro" id="IPR013288">
    <property type="entry name" value="Cyt_c_oxidase_su4"/>
</dbReference>
<dbReference type="InterPro" id="IPR004203">
    <property type="entry name" value="Cyt_c_oxidase_su4_fam"/>
</dbReference>
<dbReference type="InterPro" id="IPR036639">
    <property type="entry name" value="Cyt_c_oxidase_su4_sf"/>
</dbReference>
<dbReference type="PANTHER" id="PTHR10707:SF11">
    <property type="entry name" value="CYTOCHROME C OXIDASE SUBUNIT 4 ISOFORM 2, MITOCHONDRIAL"/>
    <property type="match status" value="1"/>
</dbReference>
<dbReference type="PANTHER" id="PTHR10707">
    <property type="entry name" value="CYTOCHROME C OXIDASE SUBUNIT IV"/>
    <property type="match status" value="1"/>
</dbReference>
<dbReference type="Pfam" id="PF02936">
    <property type="entry name" value="COX4"/>
    <property type="match status" value="1"/>
</dbReference>
<dbReference type="PRINTS" id="PR01873">
    <property type="entry name" value="CYTCOXIDASE4"/>
</dbReference>
<dbReference type="SUPFAM" id="SSF81406">
    <property type="entry name" value="Mitochondrial cytochrome c oxidase subunit IV"/>
    <property type="match status" value="1"/>
</dbReference>
<feature type="transit peptide" description="Mitochondrion" evidence="3">
    <location>
        <begin position="1"/>
        <end position="28"/>
    </location>
</feature>
<feature type="chain" id="PRO_0000006089" description="Cytochrome c oxidase subunit 4 isoform 2, mitochondrial">
    <location>
        <begin position="29"/>
        <end position="171"/>
    </location>
</feature>
<feature type="topological domain" description="Mitochondrial matrix" evidence="1">
    <location>
        <begin position="29"/>
        <end position="100"/>
    </location>
</feature>
<feature type="transmembrane region" description="Helical" evidence="1">
    <location>
        <begin position="101"/>
        <end position="126"/>
    </location>
</feature>
<feature type="topological domain" description="Mitochondrial intermembrane" evidence="1">
    <location>
        <begin position="127"/>
        <end position="171"/>
    </location>
</feature>
<feature type="region of interest" description="Disordered" evidence="4">
    <location>
        <begin position="13"/>
        <end position="32"/>
    </location>
</feature>
<feature type="sequence variant" id="VAR_058101" description="In EPIDACH; expression in patient fibroblasts is reduced to 25% of control values in normoxic conditions; the mutant protein shows an impaired response to hypoxia; dbSNP:rs119455950." evidence="6">
    <original>E</original>
    <variation>K</variation>
    <location>
        <position position="138"/>
    </location>
</feature>
<feature type="sequence variant" id="VAR_033815" description="In dbSNP:rs11907253." evidence="5">
    <original>R</original>
    <variation>H</variation>
    <location>
        <position position="161"/>
    </location>
</feature>
<comment type="function">
    <text evidence="2">Component of the cytochrome c oxidase, the last enzyme in the mitochondrial electron transport chain which drives oxidative phosphorylation. The respiratory chain contains 3 multisubunit complexes succinate dehydrogenase (complex II, CII), ubiquinol-cytochrome c oxidoreductase (cytochrome b-c1 complex, complex III, CIII) and cytochrome c oxidase (complex IV, CIV), that cooperate to transfer electrons derived from NADH and succinate to molecular oxygen, creating an electrochemical gradient over the inner membrane that drives transmembrane transport and the ATP synthase. Cytochrome c oxidase is the component of the respiratory chain that catalyzes the reduction of oxygen to water. Electrons originating from reduced cytochrome c in the intermembrane space (IMS) are transferred via the dinuclear copper A center (CU(A)) of subunit 2 and heme A of subunit 1 to the active site in subunit 1, a binuclear center (BNC) formed by heme A3 and copper B (CU(B)). The BNC reduces molecular oxygen to 2 water molecules using 4 electrons from cytochrome c in the IMS and 4 protons from the mitochondrial matrix.</text>
</comment>
<comment type="pathway">
    <text evidence="2">Energy metabolism; oxidative phosphorylation.</text>
</comment>
<comment type="subunit">
    <text evidence="1">Component of the cytochrome c oxidase (complex IV, CIV), a multisubunit enzyme composed of 14 subunits. The complex is composed of a catalytic core of 3 subunits MT-CO1, MT-CO2 and MT-CO3, encoded in the mitochondrial DNA, and 11 supernumerary subunits COX4I1 (or COX4I2), COX5A, COX5B, COX6A1 (or COX6A2), COX6B1 (or COX6B2), COX6C, COX7A2 (or COX7A1), COX7B, COX7C, COX8A and NDUFA4, which are encoded in the nuclear genome (By similarity). The complex exists as a monomer or a dimer and forms supercomplexes (SCs) in the inner mitochondrial membrane with NADH-ubiquinone oxidoreductase (complex I, CI) and ubiquinol-cytochrome c oxidoreductase (cytochrome b-c1 complex, complex III, CIII), resulting in different assemblies (supercomplex SCI(1)III(2)IV(1) and megacomplex MCI(2)III(2)IV(2)) (By similarity).</text>
</comment>
<comment type="subcellular location">
    <subcellularLocation>
        <location evidence="1">Mitochondrion inner membrane</location>
        <topology evidence="1">Single-pass membrane protein</topology>
    </subcellularLocation>
</comment>
<comment type="tissue specificity">
    <text>Highly expressed in lung.</text>
</comment>
<comment type="disease" evidence="6">
    <disease id="DI-01540">
        <name>Exocrine pancreatic insufficiency dyserythropoietic anemia and calvarial hyperostosis</name>
        <acronym>EPIDACH</acronym>
        <description>Patients present with pancreatic insufficiency, intestinal malabsorption, failure to thrive, and anemia soon after birth.</description>
        <dbReference type="MIM" id="612714"/>
    </disease>
    <text>The disease is caused by variants affecting the gene represented in this entry.</text>
</comment>
<comment type="similarity">
    <text evidence="7">Belongs to the cytochrome c oxidase IV family.</text>
</comment>
<evidence type="ECO:0000250" key="1">
    <source>
        <dbReference type="UniProtKB" id="P00423"/>
    </source>
</evidence>
<evidence type="ECO:0000250" key="2">
    <source>
        <dbReference type="UniProtKB" id="P00424"/>
    </source>
</evidence>
<evidence type="ECO:0000255" key="3"/>
<evidence type="ECO:0000256" key="4">
    <source>
        <dbReference type="SAM" id="MobiDB-lite"/>
    </source>
</evidence>
<evidence type="ECO:0000269" key="5">
    <source>
    </source>
</evidence>
<evidence type="ECO:0000269" key="6">
    <source>
    </source>
</evidence>
<evidence type="ECO:0000305" key="7"/>
<evidence type="ECO:0000312" key="8">
    <source>
        <dbReference type="HGNC" id="HGNC:16232"/>
    </source>
</evidence>
<protein>
    <recommendedName>
        <fullName>Cytochrome c oxidase subunit 4 isoform 2, mitochondrial</fullName>
    </recommendedName>
    <alternativeName>
        <fullName>Cytochrome c oxidase subunit IV isoform 2</fullName>
        <shortName>COX IV-2</shortName>
    </alternativeName>
</protein>
<gene>
    <name evidence="8" type="primary">COX4I2</name>
    <name evidence="8" type="synonym">COX4L2</name>
</gene>
<keyword id="KW-0225">Disease variant</keyword>
<keyword id="KW-0472">Membrane</keyword>
<keyword id="KW-0496">Mitochondrion</keyword>
<keyword id="KW-0999">Mitochondrion inner membrane</keyword>
<keyword id="KW-1267">Proteomics identification</keyword>
<keyword id="KW-1185">Reference proteome</keyword>
<keyword id="KW-0809">Transit peptide</keyword>
<keyword id="KW-0812">Transmembrane</keyword>
<keyword id="KW-1133">Transmembrane helix</keyword>